<keyword id="KW-0007">Acetylation</keyword>
<keyword id="KW-0597">Phosphoprotein</keyword>
<keyword id="KW-1185">Reference proteome</keyword>
<gene>
    <name type="primary">Fam136a</name>
</gene>
<name>F136A_RAT</name>
<sequence>MAEVQQLRVQEAVDAMVKSVERENIRKMQGLMFRCSANCCEDNQASMQQVHQCIERCHAPLAQAQALVTSELERFQDRLARCTMHCNDKAKDSMDAGSKELQVKRQLDSCVAKCVDDHMHLIPTMTKKIKESLSSIGK</sequence>
<dbReference type="EMBL" id="BC158733">
    <property type="protein sequence ID" value="AAI58734.1"/>
    <property type="molecule type" value="mRNA"/>
</dbReference>
<dbReference type="RefSeq" id="NP_001100075.1">
    <property type="nucleotide sequence ID" value="NM_001106605.1"/>
</dbReference>
<dbReference type="SMR" id="B0BN94"/>
<dbReference type="FunCoup" id="B0BN94">
    <property type="interactions" value="2316"/>
</dbReference>
<dbReference type="STRING" id="10116.ENSRNOP00000022014"/>
<dbReference type="iPTMnet" id="B0BN94"/>
<dbReference type="PhosphoSitePlus" id="B0BN94"/>
<dbReference type="jPOST" id="B0BN94"/>
<dbReference type="PaxDb" id="10116-ENSRNOP00000022014"/>
<dbReference type="PeptideAtlas" id="B0BN94"/>
<dbReference type="Ensembl" id="ENSRNOT00000022014.6">
    <property type="protein sequence ID" value="ENSRNOP00000022014.4"/>
    <property type="gene ID" value="ENSRNOG00000016273.6"/>
</dbReference>
<dbReference type="GeneID" id="297415"/>
<dbReference type="KEGG" id="rno:297415"/>
<dbReference type="UCSC" id="RGD:1304825">
    <property type="organism name" value="rat"/>
</dbReference>
<dbReference type="AGR" id="RGD:1304825"/>
<dbReference type="CTD" id="84908"/>
<dbReference type="RGD" id="1304825">
    <property type="gene designation" value="Fam136a"/>
</dbReference>
<dbReference type="eggNOG" id="KOG3377">
    <property type="taxonomic scope" value="Eukaryota"/>
</dbReference>
<dbReference type="GeneTree" id="ENSGT00390000006707"/>
<dbReference type="HOGENOM" id="CLU_110442_3_0_1"/>
<dbReference type="InParanoid" id="B0BN94"/>
<dbReference type="OMA" id="EMEGCVV"/>
<dbReference type="OrthoDB" id="9975421at2759"/>
<dbReference type="PhylomeDB" id="B0BN94"/>
<dbReference type="TreeFam" id="TF315119"/>
<dbReference type="PRO" id="PR:B0BN94"/>
<dbReference type="Proteomes" id="UP000002494">
    <property type="component" value="Chromosome 4"/>
</dbReference>
<dbReference type="Bgee" id="ENSRNOG00000016273">
    <property type="expression patterns" value="Expressed in ovary and 20 other cell types or tissues"/>
</dbReference>
<dbReference type="GO" id="GO:0005737">
    <property type="term" value="C:cytoplasm"/>
    <property type="evidence" value="ECO:0000318"/>
    <property type="project" value="GO_Central"/>
</dbReference>
<dbReference type="GO" id="GO:0005739">
    <property type="term" value="C:mitochondrion"/>
    <property type="evidence" value="ECO:0000314"/>
    <property type="project" value="FlyBase"/>
</dbReference>
<dbReference type="InterPro" id="IPR008560">
    <property type="entry name" value="DUF842_euk"/>
</dbReference>
<dbReference type="PANTHER" id="PTHR21096">
    <property type="entry name" value="PROTEIN FAM136A"/>
    <property type="match status" value="1"/>
</dbReference>
<dbReference type="PANTHER" id="PTHR21096:SF0">
    <property type="entry name" value="PROTEIN FAM136A"/>
    <property type="match status" value="1"/>
</dbReference>
<dbReference type="Pfam" id="PF05811">
    <property type="entry name" value="DUF842"/>
    <property type="match status" value="1"/>
</dbReference>
<protein>
    <recommendedName>
        <fullName>Protein FAM136A</fullName>
    </recommendedName>
</protein>
<accession>B0BN94</accession>
<feature type="initiator methionine" description="Removed" evidence="1">
    <location>
        <position position="1"/>
    </location>
</feature>
<feature type="chain" id="PRO_0000331362" description="Protein FAM136A">
    <location>
        <begin position="2"/>
        <end position="138"/>
    </location>
</feature>
<feature type="modified residue" description="N-acetylalanine" evidence="1">
    <location>
        <position position="2"/>
    </location>
</feature>
<feature type="modified residue" description="Phosphothreonine" evidence="3">
    <location>
        <position position="124"/>
    </location>
</feature>
<feature type="modified residue" description="Phosphothreonine" evidence="3">
    <location>
        <position position="126"/>
    </location>
</feature>
<proteinExistence type="evidence at protein level"/>
<comment type="similarity">
    <text evidence="2">Belongs to the FAM136 family.</text>
</comment>
<reference key="1">
    <citation type="journal article" date="2004" name="Genome Res.">
        <title>The status, quality, and expansion of the NIH full-length cDNA project: the Mammalian Gene Collection (MGC).</title>
        <authorList>
            <consortium name="The MGC Project Team"/>
        </authorList>
    </citation>
    <scope>NUCLEOTIDE SEQUENCE [LARGE SCALE MRNA]</scope>
</reference>
<reference key="2">
    <citation type="journal article" date="2006" name="Proc. Natl. Acad. Sci. U.S.A.">
        <title>Quantitative phosphoproteomics of vasopressin-sensitive renal cells: regulation of aquaporin-2 phosphorylation at two sites.</title>
        <authorList>
            <person name="Hoffert J.D."/>
            <person name="Pisitkun T."/>
            <person name="Wang G."/>
            <person name="Shen R.-F."/>
            <person name="Knepper M.A."/>
        </authorList>
    </citation>
    <scope>PHOSPHORYLATION [LARGE SCALE ANALYSIS] AT THR-124 AND THR-126</scope>
    <scope>IDENTIFICATION BY MASS SPECTROMETRY [LARGE SCALE ANALYSIS]</scope>
</reference>
<evidence type="ECO:0000250" key="1">
    <source>
        <dbReference type="UniProtKB" id="Q96C01"/>
    </source>
</evidence>
<evidence type="ECO:0000305" key="2"/>
<evidence type="ECO:0007744" key="3">
    <source>
    </source>
</evidence>
<organism>
    <name type="scientific">Rattus norvegicus</name>
    <name type="common">Rat</name>
    <dbReference type="NCBI Taxonomy" id="10116"/>
    <lineage>
        <taxon>Eukaryota</taxon>
        <taxon>Metazoa</taxon>
        <taxon>Chordata</taxon>
        <taxon>Craniata</taxon>
        <taxon>Vertebrata</taxon>
        <taxon>Euteleostomi</taxon>
        <taxon>Mammalia</taxon>
        <taxon>Eutheria</taxon>
        <taxon>Euarchontoglires</taxon>
        <taxon>Glires</taxon>
        <taxon>Rodentia</taxon>
        <taxon>Myomorpha</taxon>
        <taxon>Muroidea</taxon>
        <taxon>Muridae</taxon>
        <taxon>Murinae</taxon>
        <taxon>Rattus</taxon>
    </lineage>
</organism>